<protein>
    <recommendedName>
        <fullName>Vegetative protein</fullName>
    </recommendedName>
</protein>
<accession>P07935</accession>
<feature type="chain" id="PRO_0000065777" description="Vegetative protein">
    <location>
        <begin position="1"/>
        <end position="178"/>
    </location>
</feature>
<feature type="region of interest" description="Disordered" evidence="1">
    <location>
        <begin position="67"/>
        <end position="102"/>
    </location>
</feature>
<feature type="region of interest" description="Disordered" evidence="1">
    <location>
        <begin position="138"/>
        <end position="158"/>
    </location>
</feature>
<feature type="compositionally biased region" description="Low complexity" evidence="1">
    <location>
        <begin position="76"/>
        <end position="90"/>
    </location>
</feature>
<proteinExistence type="predicted"/>
<reference key="1">
    <citation type="journal article" date="1987" name="J. Mol. Biol.">
        <title>Identification of a vegetative promoter in Myxococcus xanthus. A protein that has homology to histones.</title>
        <authorList>
            <person name="Komano T."/>
            <person name="Franceschini T."/>
            <person name="Inouye S."/>
        </authorList>
    </citation>
    <scope>NUCLEOTIDE SEQUENCE [GENOMIC DNA]</scope>
    <source>
        <strain>FB / DZF1</strain>
    </source>
</reference>
<dbReference type="EMBL" id="X05946">
    <property type="protein sequence ID" value="CAA29377.1"/>
    <property type="molecule type" value="Genomic_DNA"/>
</dbReference>
<dbReference type="PIR" id="S00528">
    <property type="entry name" value="S00528"/>
</dbReference>
<dbReference type="RefSeq" id="WP_026114266.1">
    <property type="nucleotide sequence ID" value="NZ_JABFNQ010000037.1"/>
</dbReference>
<dbReference type="SMR" id="P07935"/>
<organism>
    <name type="scientific">Myxococcus xanthus</name>
    <dbReference type="NCBI Taxonomy" id="34"/>
    <lineage>
        <taxon>Bacteria</taxon>
        <taxon>Pseudomonadati</taxon>
        <taxon>Myxococcota</taxon>
        <taxon>Myxococcia</taxon>
        <taxon>Myxococcales</taxon>
        <taxon>Cystobacterineae</taxon>
        <taxon>Myxococcaceae</taxon>
        <taxon>Myxococcus</taxon>
    </lineage>
</organism>
<name>VEGA_MYXXA</name>
<evidence type="ECO:0000256" key="1">
    <source>
        <dbReference type="SAM" id="MobiDB-lite"/>
    </source>
</evidence>
<sequence length="178" mass="18671">MSVDKAFRDMIRNEIEVQLKPLRDVVARLEEGTADLDALRNVAERLAPLAEVVGPLFGAQIPAAAKAGRRGPGRPPAARSAVTAAPAAVGGKRRGRKPAAAGADGSRACAIIGCGKPSRTKGYCAAHYQKLRMLEKTNRRPSDWKDYADPDSVDDIKLPRGRAASKALAAAAQAGHAG</sequence>
<gene>
    <name type="primary">vegA</name>
</gene>